<dbReference type="EMBL" id="CP017624">
    <property type="protein sequence ID" value="AOW27379.1"/>
    <property type="molecule type" value="Genomic_DNA"/>
</dbReference>
<dbReference type="RefSeq" id="XP_721001.2">
    <property type="nucleotide sequence ID" value="XM_715908.2"/>
</dbReference>
<dbReference type="SMR" id="Q5AHB8"/>
<dbReference type="BioGRID" id="1220332">
    <property type="interactions" value="2"/>
</dbReference>
<dbReference type="FunCoup" id="Q5AHB8">
    <property type="interactions" value="300"/>
</dbReference>
<dbReference type="STRING" id="237561.Q5AHB8"/>
<dbReference type="EnsemblFungi" id="C2_03430W_A-T">
    <property type="protein sequence ID" value="C2_03430W_A-T-p1"/>
    <property type="gene ID" value="C2_03430W_A"/>
</dbReference>
<dbReference type="GeneID" id="3637410"/>
<dbReference type="KEGG" id="cal:CAALFM_C203430WA"/>
<dbReference type="CGD" id="CAL0000174600">
    <property type="gene designation" value="NBN1"/>
</dbReference>
<dbReference type="VEuPathDB" id="FungiDB:C2_03430W_A"/>
<dbReference type="eggNOG" id="KOG1973">
    <property type="taxonomic scope" value="Eukaryota"/>
</dbReference>
<dbReference type="HOGENOM" id="CLU_031900_2_0_1"/>
<dbReference type="InParanoid" id="Q5AHB8"/>
<dbReference type="OMA" id="PIYITPQ"/>
<dbReference type="OrthoDB" id="5411773at2759"/>
<dbReference type="PRO" id="PR:Q5AHB8"/>
<dbReference type="Proteomes" id="UP000000559">
    <property type="component" value="Chromosome 2"/>
</dbReference>
<dbReference type="GO" id="GO:0005829">
    <property type="term" value="C:cytosol"/>
    <property type="evidence" value="ECO:0007669"/>
    <property type="project" value="EnsemblFungi"/>
</dbReference>
<dbReference type="GO" id="GO:0035267">
    <property type="term" value="C:NuA4 histone acetyltransferase complex"/>
    <property type="evidence" value="ECO:0000314"/>
    <property type="project" value="CGD"/>
</dbReference>
<dbReference type="GO" id="GO:0000786">
    <property type="term" value="C:nucleosome"/>
    <property type="evidence" value="ECO:0007669"/>
    <property type="project" value="EnsemblFungi"/>
</dbReference>
<dbReference type="GO" id="GO:0005634">
    <property type="term" value="C:nucleus"/>
    <property type="evidence" value="ECO:0000318"/>
    <property type="project" value="GO_Central"/>
</dbReference>
<dbReference type="GO" id="GO:0032777">
    <property type="term" value="C:piccolo histone acetyltransferase complex"/>
    <property type="evidence" value="ECO:0007669"/>
    <property type="project" value="EnsemblFungi"/>
</dbReference>
<dbReference type="GO" id="GO:0004402">
    <property type="term" value="F:histone acetyltransferase activity"/>
    <property type="evidence" value="ECO:0007669"/>
    <property type="project" value="EnsemblFungi"/>
</dbReference>
<dbReference type="GO" id="GO:0140002">
    <property type="term" value="F:histone H3K4me3 reader activity"/>
    <property type="evidence" value="ECO:0007669"/>
    <property type="project" value="EnsemblFungi"/>
</dbReference>
<dbReference type="GO" id="GO:0035064">
    <property type="term" value="F:methylated histone binding"/>
    <property type="evidence" value="ECO:0000318"/>
    <property type="project" value="GO_Central"/>
</dbReference>
<dbReference type="GO" id="GO:0008270">
    <property type="term" value="F:zinc ion binding"/>
    <property type="evidence" value="ECO:0007669"/>
    <property type="project" value="UniProtKB-KW"/>
</dbReference>
<dbReference type="GO" id="GO:0006281">
    <property type="term" value="P:DNA repair"/>
    <property type="evidence" value="ECO:0007669"/>
    <property type="project" value="UniProtKB-KW"/>
</dbReference>
<dbReference type="GO" id="GO:0030447">
    <property type="term" value="P:filamentous growth"/>
    <property type="evidence" value="ECO:0000315"/>
    <property type="project" value="CGD"/>
</dbReference>
<dbReference type="GO" id="GO:0036180">
    <property type="term" value="P:filamentous growth of a population of unicellular organisms in response to biotic stimulus"/>
    <property type="evidence" value="ECO:0000315"/>
    <property type="project" value="CGD"/>
</dbReference>
<dbReference type="GO" id="GO:0051321">
    <property type="term" value="P:meiotic cell cycle"/>
    <property type="evidence" value="ECO:0007669"/>
    <property type="project" value="UniProtKB-KW"/>
</dbReference>
<dbReference type="GO" id="GO:0006355">
    <property type="term" value="P:regulation of DNA-templated transcription"/>
    <property type="evidence" value="ECO:0000318"/>
    <property type="project" value="GO_Central"/>
</dbReference>
<dbReference type="CDD" id="cd16858">
    <property type="entry name" value="ING_ING3_Yng2p"/>
    <property type="match status" value="1"/>
</dbReference>
<dbReference type="CDD" id="cd15505">
    <property type="entry name" value="PHD_ING"/>
    <property type="match status" value="1"/>
</dbReference>
<dbReference type="FunFam" id="3.30.40.10:FF:000436">
    <property type="entry name" value="Chromatin modification-related protein"/>
    <property type="match status" value="1"/>
</dbReference>
<dbReference type="Gene3D" id="6.10.140.1740">
    <property type="match status" value="1"/>
</dbReference>
<dbReference type="Gene3D" id="3.30.40.10">
    <property type="entry name" value="Zinc/RING finger domain, C3HC4 (zinc finger)"/>
    <property type="match status" value="1"/>
</dbReference>
<dbReference type="InterPro" id="IPR028651">
    <property type="entry name" value="ING_fam"/>
</dbReference>
<dbReference type="InterPro" id="IPR024610">
    <property type="entry name" value="ING_N_histone-binding"/>
</dbReference>
<dbReference type="InterPro" id="IPR019786">
    <property type="entry name" value="Zinc_finger_PHD-type_CS"/>
</dbReference>
<dbReference type="InterPro" id="IPR011011">
    <property type="entry name" value="Znf_FYVE_PHD"/>
</dbReference>
<dbReference type="InterPro" id="IPR001965">
    <property type="entry name" value="Znf_PHD"/>
</dbReference>
<dbReference type="InterPro" id="IPR019787">
    <property type="entry name" value="Znf_PHD-finger"/>
</dbReference>
<dbReference type="InterPro" id="IPR013083">
    <property type="entry name" value="Znf_RING/FYVE/PHD"/>
</dbReference>
<dbReference type="PANTHER" id="PTHR10333:SF100">
    <property type="entry name" value="CHROMATIN MODIFICATION-RELATED PROTEIN YNG2"/>
    <property type="match status" value="1"/>
</dbReference>
<dbReference type="PANTHER" id="PTHR10333">
    <property type="entry name" value="INHIBITOR OF GROWTH PROTEIN"/>
    <property type="match status" value="1"/>
</dbReference>
<dbReference type="Pfam" id="PF12998">
    <property type="entry name" value="ING"/>
    <property type="match status" value="1"/>
</dbReference>
<dbReference type="SMART" id="SM01408">
    <property type="entry name" value="ING"/>
    <property type="match status" value="1"/>
</dbReference>
<dbReference type="SMART" id="SM00249">
    <property type="entry name" value="PHD"/>
    <property type="match status" value="1"/>
</dbReference>
<dbReference type="SUPFAM" id="SSF57903">
    <property type="entry name" value="FYVE/PHD zinc finger"/>
    <property type="match status" value="1"/>
</dbReference>
<dbReference type="PROSITE" id="PS01359">
    <property type="entry name" value="ZF_PHD_1"/>
    <property type="match status" value="1"/>
</dbReference>
<dbReference type="PROSITE" id="PS50016">
    <property type="entry name" value="ZF_PHD_2"/>
    <property type="match status" value="1"/>
</dbReference>
<name>YNG2_CANAL</name>
<evidence type="ECO:0000250" key="1"/>
<evidence type="ECO:0000250" key="2">
    <source>
        <dbReference type="UniProtKB" id="Q9UK53"/>
    </source>
</evidence>
<evidence type="ECO:0000255" key="3"/>
<evidence type="ECO:0000255" key="4">
    <source>
        <dbReference type="PROSITE-ProRule" id="PRU00146"/>
    </source>
</evidence>
<evidence type="ECO:0000256" key="5">
    <source>
        <dbReference type="SAM" id="MobiDB-lite"/>
    </source>
</evidence>
<evidence type="ECO:0000305" key="6"/>
<proteinExistence type="inferred from homology"/>
<feature type="chain" id="PRO_0000212674" description="Chromatin modification-related protein YNG2">
    <location>
        <begin position="1"/>
        <end position="298"/>
    </location>
</feature>
<feature type="zinc finger region" description="PHD-type" evidence="4">
    <location>
        <begin position="237"/>
        <end position="288"/>
    </location>
</feature>
<feature type="region of interest" description="Disordered" evidence="5">
    <location>
        <begin position="140"/>
        <end position="206"/>
    </location>
</feature>
<feature type="coiled-coil region" evidence="3">
    <location>
        <begin position="20"/>
        <end position="86"/>
    </location>
</feature>
<feature type="compositionally biased region" description="Polar residues" evidence="5">
    <location>
        <begin position="140"/>
        <end position="158"/>
    </location>
</feature>
<feature type="compositionally biased region" description="Low complexity" evidence="5">
    <location>
        <begin position="174"/>
        <end position="188"/>
    </location>
</feature>
<feature type="binding site" evidence="2">
    <location>
        <position position="240"/>
    </location>
    <ligand>
        <name>Zn(2+)</name>
        <dbReference type="ChEBI" id="CHEBI:29105"/>
        <label>1</label>
    </ligand>
</feature>
<feature type="binding site" evidence="2">
    <location>
        <position position="242"/>
    </location>
    <ligand>
        <name>Zn(2+)</name>
        <dbReference type="ChEBI" id="CHEBI:29105"/>
        <label>1</label>
    </ligand>
</feature>
<feature type="binding site" evidence="2">
    <location>
        <position position="253"/>
    </location>
    <ligand>
        <name>Zn(2+)</name>
        <dbReference type="ChEBI" id="CHEBI:29105"/>
        <label>2</label>
    </ligand>
</feature>
<feature type="binding site" evidence="2">
    <location>
        <position position="258"/>
    </location>
    <ligand>
        <name>Zn(2+)</name>
        <dbReference type="ChEBI" id="CHEBI:29105"/>
        <label>2</label>
    </ligand>
</feature>
<feature type="binding site" evidence="2">
    <location>
        <position position="264"/>
    </location>
    <ligand>
        <name>Zn(2+)</name>
        <dbReference type="ChEBI" id="CHEBI:29105"/>
        <label>1</label>
    </ligand>
</feature>
<feature type="binding site" evidence="2">
    <location>
        <position position="267"/>
    </location>
    <ligand>
        <name>Zn(2+)</name>
        <dbReference type="ChEBI" id="CHEBI:29105"/>
        <label>1</label>
    </ligand>
</feature>
<feature type="binding site" evidence="2">
    <location>
        <position position="282"/>
    </location>
    <ligand>
        <name>Zn(2+)</name>
        <dbReference type="ChEBI" id="CHEBI:29105"/>
        <label>2</label>
    </ligand>
</feature>
<feature type="binding site" evidence="2">
    <location>
        <position position="285"/>
    </location>
    <ligand>
        <name>Zn(2+)</name>
        <dbReference type="ChEBI" id="CHEBI:29105"/>
        <label>2</label>
    </ligand>
</feature>
<feature type="site" description="Histone H3K4me3 binding" evidence="2">
    <location>
        <position position="239"/>
    </location>
</feature>
<feature type="site" description="Histone H3K4me3 binding" evidence="2">
    <location>
        <position position="250"/>
    </location>
</feature>
<feature type="site" description="Histone H3K4me3 binding" evidence="2">
    <location>
        <position position="254"/>
    </location>
</feature>
<feature type="site" description="Histone H3K4me3 binding" evidence="2">
    <location>
        <position position="262"/>
    </location>
</feature>
<keyword id="KW-0131">Cell cycle</keyword>
<keyword id="KW-0156">Chromatin regulator</keyword>
<keyword id="KW-0175">Coiled coil</keyword>
<keyword id="KW-0227">DNA damage</keyword>
<keyword id="KW-0234">DNA repair</keyword>
<keyword id="KW-0469">Meiosis</keyword>
<keyword id="KW-0479">Metal-binding</keyword>
<keyword id="KW-0539">Nucleus</keyword>
<keyword id="KW-1185">Reference proteome</keyword>
<keyword id="KW-0862">Zinc</keyword>
<keyword id="KW-0863">Zinc-finger</keyword>
<accession>Q5AHB8</accession>
<accession>A0A1D8PGW5</accession>
<gene>
    <name type="primary">YNG2</name>
    <name type="synonym">NBN1</name>
    <name type="ordered locus">CAALFM_C203430WA</name>
    <name type="ORF">CaO19.8497</name>
    <name type="ORF">CaO19.878</name>
</gene>
<reference key="1">
    <citation type="journal article" date="2004" name="Proc. Natl. Acad. Sci. U.S.A.">
        <title>The diploid genome sequence of Candida albicans.</title>
        <authorList>
            <person name="Jones T."/>
            <person name="Federspiel N.A."/>
            <person name="Chibana H."/>
            <person name="Dungan J."/>
            <person name="Kalman S."/>
            <person name="Magee B.B."/>
            <person name="Newport G."/>
            <person name="Thorstenson Y.R."/>
            <person name="Agabian N."/>
            <person name="Magee P.T."/>
            <person name="Davis R.W."/>
            <person name="Scherer S."/>
        </authorList>
    </citation>
    <scope>NUCLEOTIDE SEQUENCE [LARGE SCALE GENOMIC DNA]</scope>
    <source>
        <strain>SC5314 / ATCC MYA-2876</strain>
    </source>
</reference>
<reference key="2">
    <citation type="journal article" date="2007" name="Genome Biol.">
        <title>Assembly of the Candida albicans genome into sixteen supercontigs aligned on the eight chromosomes.</title>
        <authorList>
            <person name="van het Hoog M."/>
            <person name="Rast T.J."/>
            <person name="Martchenko M."/>
            <person name="Grindle S."/>
            <person name="Dignard D."/>
            <person name="Hogues H."/>
            <person name="Cuomo C."/>
            <person name="Berriman M."/>
            <person name="Scherer S."/>
            <person name="Magee B.B."/>
            <person name="Whiteway M."/>
            <person name="Chibana H."/>
            <person name="Nantel A."/>
            <person name="Magee P.T."/>
        </authorList>
    </citation>
    <scope>GENOME REANNOTATION</scope>
    <source>
        <strain>SC5314 / ATCC MYA-2876</strain>
    </source>
</reference>
<reference key="3">
    <citation type="journal article" date="2013" name="Genome Biol.">
        <title>Assembly of a phased diploid Candida albicans genome facilitates allele-specific measurements and provides a simple model for repeat and indel structure.</title>
        <authorList>
            <person name="Muzzey D."/>
            <person name="Schwartz K."/>
            <person name="Weissman J.S."/>
            <person name="Sherlock G."/>
        </authorList>
    </citation>
    <scope>NUCLEOTIDE SEQUENCE [LARGE SCALE GENOMIC DNA]</scope>
    <scope>GENOME REANNOTATION</scope>
    <source>
        <strain>SC5314 / ATCC MYA-2876</strain>
    </source>
</reference>
<comment type="function">
    <text evidence="1">Component of the NuA4 histone acetyltransferase complex which is involved in transcriptional activation of selected genes principally by acetylation of nucleosomal histone H4 and H2A. The NuA4 complex is also involved in DNA repair. Involved in cell cycle progression and meiosis (By similarity).</text>
</comment>
<comment type="subunit">
    <text evidence="1">Interacts with H3K4me3 and to a lesser extent with H3K4me2. Component of the NuA4 histone acetyltransferase complex.</text>
</comment>
<comment type="subcellular location">
    <subcellularLocation>
        <location evidence="1">Nucleus</location>
    </subcellularLocation>
</comment>
<comment type="domain">
    <text evidence="1">The PHD-type zinc finger mediates the binding to H3K4me3.</text>
</comment>
<comment type="similarity">
    <text evidence="6">Belongs to the ING family.</text>
</comment>
<protein>
    <recommendedName>
        <fullName>Chromatin modification-related protein YNG2</fullName>
    </recommendedName>
    <alternativeName>
        <fullName>ING1 homolog 2</fullName>
    </alternativeName>
</protein>
<sequence>MDTSTVLEKYTQDLSNLPLEVRHLLEEIKSKDVQVSEARKRYQTRDHQLHKFIRTNGTLTKHPKEDQLYSKIEEDMKLVQKLQKEKILLANTALFLISKHLYHFETDIAKLERDELLPPLEHPIELTEVSKDEYAKSLNGFSDSASATPTPRNGSSATPVAETVKKIQKKKLSVKGASSSSAQSSSASRQVKRLRSEEIEDPLPYEGGSLAFNGNVAMSINSAADANGPNGEDADNNLYCFCQRVSFGEMIGCDNEDCKYEWFHWSCVGITSPPKDDEIWYCPDCASKMEKRKKKRKN</sequence>
<organism>
    <name type="scientific">Candida albicans (strain SC5314 / ATCC MYA-2876)</name>
    <name type="common">Yeast</name>
    <dbReference type="NCBI Taxonomy" id="237561"/>
    <lineage>
        <taxon>Eukaryota</taxon>
        <taxon>Fungi</taxon>
        <taxon>Dikarya</taxon>
        <taxon>Ascomycota</taxon>
        <taxon>Saccharomycotina</taxon>
        <taxon>Pichiomycetes</taxon>
        <taxon>Debaryomycetaceae</taxon>
        <taxon>Candida/Lodderomyces clade</taxon>
        <taxon>Candida</taxon>
    </lineage>
</organism>